<evidence type="ECO:0000250" key="1">
    <source>
        <dbReference type="UniProtKB" id="A2R2S8"/>
    </source>
</evidence>
<evidence type="ECO:0000250" key="2">
    <source>
        <dbReference type="UniProtKB" id="Q5ATP7"/>
    </source>
</evidence>
<evidence type="ECO:0000255" key="3"/>
<evidence type="ECO:0000269" key="4">
    <source>
    </source>
</evidence>
<evidence type="ECO:0000269" key="5">
    <source>
    </source>
</evidence>
<evidence type="ECO:0000305" key="6"/>
<evidence type="ECO:0000312" key="7">
    <source>
        <dbReference type="Proteomes" id="UP000008866"/>
    </source>
</evidence>
<gene>
    <name evidence="2" type="primary">phiA</name>
    <name type="ORF">ARB_00075</name>
</gene>
<dbReference type="EMBL" id="ABSU01000012">
    <property type="protein sequence ID" value="EFE32988.1"/>
    <property type="molecule type" value="Genomic_DNA"/>
</dbReference>
<dbReference type="RefSeq" id="XP_003013628.1">
    <property type="nucleotide sequence ID" value="XM_003013582.1"/>
</dbReference>
<dbReference type="STRING" id="663331.D4AV66"/>
<dbReference type="GeneID" id="9519907"/>
<dbReference type="KEGG" id="abe:ARB_00075"/>
<dbReference type="eggNOG" id="ENOG502SRG4">
    <property type="taxonomic scope" value="Eukaryota"/>
</dbReference>
<dbReference type="HOGENOM" id="CLU_097238_0_0_1"/>
<dbReference type="OMA" id="QGWTIDG"/>
<dbReference type="OrthoDB" id="4093325at2759"/>
<dbReference type="Proteomes" id="UP000008866">
    <property type="component" value="Unassembled WGS sequence"/>
</dbReference>
<dbReference type="GO" id="GO:0005576">
    <property type="term" value="C:extracellular region"/>
    <property type="evidence" value="ECO:0007669"/>
    <property type="project" value="UniProtKB-SubCell"/>
</dbReference>
<dbReference type="GO" id="GO:0030435">
    <property type="term" value="P:sporulation resulting in formation of a cellular spore"/>
    <property type="evidence" value="ECO:0007669"/>
    <property type="project" value="UniProtKB-KW"/>
</dbReference>
<sequence>MKLLAIISASLALAGFTTATPPPQTFSIKAKGNPKVPSARFDASRSNIFLNYGDSGAVCEVKPGCPKPKDAVFYLKDSILYLYTGSSNPVQKVFLDRSGFGQGKIGYLTGDGQLPSRWEVQGWTIDGAGNLKFKGKGLIACPTSDPKIKSWTVWADLGIATPGGNKGCLPFTAHTMKTKPVACKYT</sequence>
<reference key="1">
    <citation type="journal article" date="2011" name="Genome Biol.">
        <title>Comparative and functional genomics provide insights into the pathogenicity of dermatophytic fungi.</title>
        <authorList>
            <person name="Burmester A."/>
            <person name="Shelest E."/>
            <person name="Gloeckner G."/>
            <person name="Heddergott C."/>
            <person name="Schindler S."/>
            <person name="Staib P."/>
            <person name="Heidel A."/>
            <person name="Felder M."/>
            <person name="Petzold A."/>
            <person name="Szafranski K."/>
            <person name="Feuermann M."/>
            <person name="Pedruzzi I."/>
            <person name="Priebe S."/>
            <person name="Groth M."/>
            <person name="Winkler R."/>
            <person name="Li W."/>
            <person name="Kniemeyer O."/>
            <person name="Schroeckh V."/>
            <person name="Hertweck C."/>
            <person name="Hube B."/>
            <person name="White T.C."/>
            <person name="Platzer M."/>
            <person name="Guthke R."/>
            <person name="Heitman J."/>
            <person name="Woestemeyer J."/>
            <person name="Zipfel P.F."/>
            <person name="Monod M."/>
            <person name="Brakhage A.A."/>
        </authorList>
    </citation>
    <scope>NUCLEOTIDE SEQUENCE [LARGE SCALE GENOMIC DNA]</scope>
    <scope>INDUCTION</scope>
    <source>
        <strain evidence="7">ATCC MYA-4681 / CBS 112371</strain>
    </source>
</reference>
<reference key="2">
    <citation type="journal article" date="2011" name="Proteomics">
        <title>Identification of novel secreted proteases during extracellular proteolysis by dermatophytes at acidic pH.</title>
        <authorList>
            <person name="Sriranganadane D."/>
            <person name="Waridel P."/>
            <person name="Salamin K."/>
            <person name="Feuermann M."/>
            <person name="Mignon B."/>
            <person name="Staib P."/>
            <person name="Neuhaus J.M."/>
            <person name="Quadroni M."/>
            <person name="Monod M."/>
        </authorList>
    </citation>
    <scope>IDENTIFICATION BY MASS SPECTROMETRY</scope>
    <scope>SUBCELLULAR LOCATION</scope>
</reference>
<comment type="function">
    <text evidence="1 2">Cell wall protein involved in development of asexual structures such as phialide and conidium development, and thus required for spore formation (By similarity). Plays a role as a general stress protectant produced by the fungus in competition with antagonistic bacteria (By similarity).</text>
</comment>
<comment type="subcellular location">
    <subcellularLocation>
        <location evidence="5">Secreted</location>
    </subcellularLocation>
    <subcellularLocation>
        <location evidence="2">Secreted</location>
        <location evidence="2">Cell wall</location>
    </subcellularLocation>
</comment>
<comment type="induction">
    <text evidence="4">Expression is down-regulated in presence of human keratinocytes.</text>
</comment>
<comment type="allergen">
    <text evidence="6">May cause an allergic reaction in human.</text>
</comment>
<comment type="similarity">
    <text evidence="6">Belongs to the phiA family.</text>
</comment>
<name>PHIA_ARTBC</name>
<feature type="signal peptide" evidence="3">
    <location>
        <begin position="1"/>
        <end position="19"/>
    </location>
</feature>
<feature type="chain" id="PRO_0000434416" description="Cell wall protein phiA" evidence="3">
    <location>
        <begin position="20"/>
        <end position="186"/>
    </location>
</feature>
<protein>
    <recommendedName>
        <fullName evidence="6">Cell wall protein phiA</fullName>
    </recommendedName>
    <alternativeName>
        <fullName evidence="6">Allergen Asp f 34 homolog</fullName>
    </alternativeName>
    <alternativeName>
        <fullName evidence="2">Phialide development protein A</fullName>
    </alternativeName>
</protein>
<accession>D4AV66</accession>
<organism>
    <name type="scientific">Arthroderma benhamiae (strain ATCC MYA-4681 / CBS 112371)</name>
    <name type="common">Trichophyton mentagrophytes</name>
    <dbReference type="NCBI Taxonomy" id="663331"/>
    <lineage>
        <taxon>Eukaryota</taxon>
        <taxon>Fungi</taxon>
        <taxon>Dikarya</taxon>
        <taxon>Ascomycota</taxon>
        <taxon>Pezizomycotina</taxon>
        <taxon>Eurotiomycetes</taxon>
        <taxon>Eurotiomycetidae</taxon>
        <taxon>Onygenales</taxon>
        <taxon>Arthrodermataceae</taxon>
        <taxon>Trichophyton</taxon>
    </lineage>
</organism>
<keyword id="KW-0020">Allergen</keyword>
<keyword id="KW-0134">Cell wall</keyword>
<keyword id="KW-1185">Reference proteome</keyword>
<keyword id="KW-0964">Secreted</keyword>
<keyword id="KW-0732">Signal</keyword>
<keyword id="KW-0749">Sporulation</keyword>
<proteinExistence type="evidence at protein level"/>